<comment type="function">
    <text evidence="1 3">Catalyzes the formation of N(4)-acetylcytidine (ac(4)C) at the wobble position of tRNA(Met), by using acetyl-CoA as an acetyl donor and ATP (or GTP).</text>
</comment>
<comment type="catalytic activity">
    <reaction evidence="1">
        <text>cytidine(34) in elongator tRNA(Met) + acetyl-CoA + ATP + H2O = N(4)-acetylcytidine(34) in elongator tRNA(Met) + ADP + phosphate + CoA + H(+)</text>
        <dbReference type="Rhea" id="RHEA:43788"/>
        <dbReference type="Rhea" id="RHEA-COMP:10693"/>
        <dbReference type="Rhea" id="RHEA-COMP:10694"/>
        <dbReference type="ChEBI" id="CHEBI:15377"/>
        <dbReference type="ChEBI" id="CHEBI:15378"/>
        <dbReference type="ChEBI" id="CHEBI:30616"/>
        <dbReference type="ChEBI" id="CHEBI:43474"/>
        <dbReference type="ChEBI" id="CHEBI:57287"/>
        <dbReference type="ChEBI" id="CHEBI:57288"/>
        <dbReference type="ChEBI" id="CHEBI:74900"/>
        <dbReference type="ChEBI" id="CHEBI:82748"/>
        <dbReference type="ChEBI" id="CHEBI:456216"/>
        <dbReference type="EC" id="2.3.1.193"/>
    </reaction>
</comment>
<comment type="subcellular location">
    <subcellularLocation>
        <location evidence="1">Cytoplasm</location>
    </subcellularLocation>
</comment>
<comment type="disruption phenotype">
    <text evidence="3">Mutants lack the ac(4)C modification, but do not show any growth defects.</text>
</comment>
<comment type="similarity">
    <text evidence="1">Belongs to the RNA cytidine acetyltransferase family. TmcA subfamily.</text>
</comment>
<gene>
    <name evidence="1" type="primary">tmcA</name>
    <name type="ordered locus">HVO_2736</name>
    <name type="ORF">C498_08969</name>
</gene>
<proteinExistence type="inferred from homology"/>
<feature type="chain" id="PRO_0000428825" description="tRNA(Met) cytidine acetyltransferase TmcA">
    <location>
        <begin position="1"/>
        <end position="754"/>
    </location>
</feature>
<feature type="domain" description="N-acetyltransferase" evidence="1">
    <location>
        <begin position="418"/>
        <end position="603"/>
    </location>
</feature>
<feature type="region of interest" description="Disordered" evidence="2">
    <location>
        <begin position="181"/>
        <end position="202"/>
    </location>
</feature>
<feature type="compositionally biased region" description="Basic and acidic residues" evidence="2">
    <location>
        <begin position="192"/>
        <end position="202"/>
    </location>
</feature>
<feature type="binding site" evidence="1">
    <location>
        <position position="212"/>
    </location>
    <ligand>
        <name>ATP</name>
        <dbReference type="ChEBI" id="CHEBI:30616"/>
    </ligand>
</feature>
<feature type="binding site" evidence="1">
    <location>
        <begin position="236"/>
        <end position="245"/>
    </location>
    <ligand>
        <name>ATP</name>
        <dbReference type="ChEBI" id="CHEBI:30616"/>
    </ligand>
</feature>
<feature type="binding site" evidence="1">
    <location>
        <position position="383"/>
    </location>
    <ligand>
        <name>ATP</name>
        <dbReference type="ChEBI" id="CHEBI:30616"/>
    </ligand>
</feature>
<feature type="binding site" evidence="1">
    <location>
        <begin position="529"/>
        <end position="531"/>
    </location>
    <ligand>
        <name>acetyl-CoA</name>
        <dbReference type="ChEBI" id="CHEBI:57288"/>
    </ligand>
</feature>
<feature type="binding site" evidence="1">
    <location>
        <begin position="536"/>
        <end position="542"/>
    </location>
    <ligand>
        <name>acetyl-CoA</name>
        <dbReference type="ChEBI" id="CHEBI:57288"/>
    </ligand>
</feature>
<feature type="binding site" evidence="1">
    <location>
        <position position="568"/>
    </location>
    <ligand>
        <name>acetyl-CoA</name>
        <dbReference type="ChEBI" id="CHEBI:57288"/>
    </ligand>
</feature>
<evidence type="ECO:0000255" key="1">
    <source>
        <dbReference type="HAMAP-Rule" id="MF_01886"/>
    </source>
</evidence>
<evidence type="ECO:0000256" key="2">
    <source>
        <dbReference type="SAM" id="MobiDB-lite"/>
    </source>
</evidence>
<evidence type="ECO:0000269" key="3">
    <source>
    </source>
</evidence>
<accession>D4GW73</accession>
<dbReference type="EC" id="2.3.1.193" evidence="1"/>
<dbReference type="EMBL" id="CP001956">
    <property type="protein sequence ID" value="ADE03866.1"/>
    <property type="molecule type" value="Genomic_DNA"/>
</dbReference>
<dbReference type="EMBL" id="AOHU01000047">
    <property type="protein sequence ID" value="ELY32328.1"/>
    <property type="molecule type" value="Genomic_DNA"/>
</dbReference>
<dbReference type="RefSeq" id="WP_004042960.1">
    <property type="nucleotide sequence ID" value="NC_013967.1"/>
</dbReference>
<dbReference type="SMR" id="D4GW73"/>
<dbReference type="IntAct" id="D4GW73">
    <property type="interactions" value="3"/>
</dbReference>
<dbReference type="STRING" id="309800.HVO_2736"/>
<dbReference type="PaxDb" id="309800-C498_08969"/>
<dbReference type="EnsemblBacteria" id="ADE03866">
    <property type="protein sequence ID" value="ADE03866"/>
    <property type="gene ID" value="HVO_2736"/>
</dbReference>
<dbReference type="GeneID" id="8926494"/>
<dbReference type="KEGG" id="hvo:HVO_2736"/>
<dbReference type="PATRIC" id="fig|309800.29.peg.1757"/>
<dbReference type="eggNOG" id="arCOG01951">
    <property type="taxonomic scope" value="Archaea"/>
</dbReference>
<dbReference type="HOGENOM" id="CLU_004652_1_0_2"/>
<dbReference type="OrthoDB" id="312894at2157"/>
<dbReference type="Proteomes" id="UP000008243">
    <property type="component" value="Chromosome"/>
</dbReference>
<dbReference type="Proteomes" id="UP000011532">
    <property type="component" value="Unassembled WGS sequence"/>
</dbReference>
<dbReference type="GO" id="GO:0005737">
    <property type="term" value="C:cytoplasm"/>
    <property type="evidence" value="ECO:0007669"/>
    <property type="project" value="UniProtKB-SubCell"/>
</dbReference>
<dbReference type="GO" id="GO:1990883">
    <property type="term" value="F:18S rRNA cytidine N-acetyltransferase activity"/>
    <property type="evidence" value="ECO:0007669"/>
    <property type="project" value="TreeGrafter"/>
</dbReference>
<dbReference type="GO" id="GO:0005524">
    <property type="term" value="F:ATP binding"/>
    <property type="evidence" value="ECO:0007669"/>
    <property type="project" value="UniProtKB-UniRule"/>
</dbReference>
<dbReference type="GO" id="GO:0000049">
    <property type="term" value="F:tRNA binding"/>
    <property type="evidence" value="ECO:0007669"/>
    <property type="project" value="UniProtKB-UniRule"/>
</dbReference>
<dbReference type="GO" id="GO:0051392">
    <property type="term" value="F:tRNA N4-acetyltransferase activity"/>
    <property type="evidence" value="ECO:0007669"/>
    <property type="project" value="UniProtKB-UniRule"/>
</dbReference>
<dbReference type="GO" id="GO:1904812">
    <property type="term" value="P:rRNA acetylation involved in maturation of SSU-rRNA"/>
    <property type="evidence" value="ECO:0007669"/>
    <property type="project" value="TreeGrafter"/>
</dbReference>
<dbReference type="GO" id="GO:0051391">
    <property type="term" value="P:tRNA acetylation"/>
    <property type="evidence" value="ECO:0007669"/>
    <property type="project" value="UniProtKB-UniRule"/>
</dbReference>
<dbReference type="GO" id="GO:0002101">
    <property type="term" value="P:tRNA wobble cytosine modification"/>
    <property type="evidence" value="ECO:0007669"/>
    <property type="project" value="UniProtKB-UniRule"/>
</dbReference>
<dbReference type="Gene3D" id="3.40.50.11040">
    <property type="match status" value="1"/>
</dbReference>
<dbReference type="Gene3D" id="3.40.630.30">
    <property type="match status" value="1"/>
</dbReference>
<dbReference type="Gene3D" id="3.40.50.300">
    <property type="entry name" value="P-loop containing nucleotide triphosphate hydrolases"/>
    <property type="match status" value="1"/>
</dbReference>
<dbReference type="HAMAP" id="MF_01886">
    <property type="entry name" value="tRNA_acetyltr_TmcA"/>
    <property type="match status" value="1"/>
</dbReference>
<dbReference type="InterPro" id="IPR016181">
    <property type="entry name" value="Acyl_CoA_acyltransferase"/>
</dbReference>
<dbReference type="InterPro" id="IPR000182">
    <property type="entry name" value="GNAT_dom"/>
</dbReference>
<dbReference type="InterPro" id="IPR007807">
    <property type="entry name" value="NAT10/TcmA_helicase"/>
</dbReference>
<dbReference type="InterPro" id="IPR027417">
    <property type="entry name" value="P-loop_NTPase"/>
</dbReference>
<dbReference type="InterPro" id="IPR032672">
    <property type="entry name" value="TmcA/NAT10/Kre33"/>
</dbReference>
<dbReference type="InterPro" id="IPR013562">
    <property type="entry name" value="TmcA_N"/>
</dbReference>
<dbReference type="InterPro" id="IPR024914">
    <property type="entry name" value="tRNA_acetyltr_TmcA"/>
</dbReference>
<dbReference type="InterPro" id="IPR053477">
    <property type="entry name" value="tRNA_Cytidine_AcTrnsfr"/>
</dbReference>
<dbReference type="NCBIfam" id="NF041296">
    <property type="entry name" value="RNAactase_tcmA_Halo"/>
    <property type="match status" value="1"/>
</dbReference>
<dbReference type="PANTHER" id="PTHR10925">
    <property type="entry name" value="N-ACETYLTRANSFERASE 10"/>
    <property type="match status" value="1"/>
</dbReference>
<dbReference type="PANTHER" id="PTHR10925:SF5">
    <property type="entry name" value="RNA CYTIDINE ACETYLTRANSFERASE"/>
    <property type="match status" value="1"/>
</dbReference>
<dbReference type="Pfam" id="PF13718">
    <property type="entry name" value="GNAT_acetyltr_2"/>
    <property type="match status" value="1"/>
</dbReference>
<dbReference type="Pfam" id="PF05127">
    <property type="entry name" value="NAT10_TcmA_helicase"/>
    <property type="match status" value="1"/>
</dbReference>
<dbReference type="Pfam" id="PF08351">
    <property type="entry name" value="TmcA_N"/>
    <property type="match status" value="1"/>
</dbReference>
<dbReference type="SUPFAM" id="SSF55729">
    <property type="entry name" value="Acyl-CoA N-acyltransferases (Nat)"/>
    <property type="match status" value="1"/>
</dbReference>
<dbReference type="SUPFAM" id="SSF52540">
    <property type="entry name" value="P-loop containing nucleoside triphosphate hydrolases"/>
    <property type="match status" value="1"/>
</dbReference>
<dbReference type="PROSITE" id="PS51186">
    <property type="entry name" value="GNAT"/>
    <property type="match status" value="1"/>
</dbReference>
<name>TMCA_HALVD</name>
<sequence>MTELGDDPDVEALAAARREEALATNQRRLLVLAGDRDAGIDAAFDAVRGADVPDDEVTFVTAREGFRFHRVEPKRASSLLGTTRTLVVLDAHEEFSANALGRVAGAVDGGGLLVLLTPSLDDWPTRRDSFDERLAVPPFSVADVTGRFRGRLVSTLRDHPGVALVDLDSGTVERDGAYRQGISFDAAPPRVPTEKDRRSPRRAYEDCLTADQSEALAALEALTEPGTAVVVEADRGRGKSSAAGLAAGSLAAEGKDVVVTAPGERNAAEVFARAERLLSELGALRGGGAGDFDIAADRGGRVRYVPPTEAGDAAADADALVVDEAAALPVGLLESFLAAPAVAFCTTVRGYEGAGRGFTVRFRDRLDDADREVTDARLDDPIRYAAGDPVESWTFRALLLDARPPVDQLVADATPETVSYRALSPDDLLADEHLLREAFGLLVLAHYRTEPDDLARLLDAPNLTLRALTHEGRVVSVALLAREGGLDPDTRRQMYDGGRIRGNMLPDVFTSQLRDEGAGVPVGYRVMRIATHHAVRSSGLGSRLLTELRDEFADDADYLGVGFGATPELLSFWRDNGYGTVHLSTTRNDTSGEYSALMTRPLSSAGRDLRDRHANWFLGRVGDVLGDALSDLDADVARAALAAVDSFLSPDLSEYEWRVVVGASYGPGLYTTAPGAFRRLGLAHLTNPERASLTPREERLVVRKVLQTHPWDAVADELDFHSTAGAMRALGDAYEPLVDEYGTDAAREERERFR</sequence>
<organism>
    <name type="scientific">Haloferax volcanii (strain ATCC 29605 / DSM 3757 / JCM 8879 / NBRC 14742 / NCIMB 2012 / VKM B-1768 / DS2)</name>
    <name type="common">Halobacterium volcanii</name>
    <dbReference type="NCBI Taxonomy" id="309800"/>
    <lineage>
        <taxon>Archaea</taxon>
        <taxon>Methanobacteriati</taxon>
        <taxon>Methanobacteriota</taxon>
        <taxon>Stenosarchaea group</taxon>
        <taxon>Halobacteria</taxon>
        <taxon>Halobacteriales</taxon>
        <taxon>Haloferacaceae</taxon>
        <taxon>Haloferax</taxon>
    </lineage>
</organism>
<reference key="1">
    <citation type="journal article" date="2010" name="PLoS ONE">
        <title>The complete genome sequence of Haloferax volcanii DS2, a model archaeon.</title>
        <authorList>
            <person name="Hartman A.L."/>
            <person name="Norais C."/>
            <person name="Badger J.H."/>
            <person name="Delmas S."/>
            <person name="Haldenby S."/>
            <person name="Madupu R."/>
            <person name="Robinson J."/>
            <person name="Khouri H."/>
            <person name="Ren Q."/>
            <person name="Lowe T.M."/>
            <person name="Maupin-Furlow J."/>
            <person name="Pohlschroder M."/>
            <person name="Daniels C."/>
            <person name="Pfeiffer F."/>
            <person name="Allers T."/>
            <person name="Eisen J.A."/>
        </authorList>
    </citation>
    <scope>NUCLEOTIDE SEQUENCE [LARGE SCALE GENOMIC DNA]</scope>
    <source>
        <strain>ATCC 29605 / DSM 3757 / JCM 8879 / NBRC 14742 / NCIMB 2012 / VKM B-1768 / DS2</strain>
    </source>
</reference>
<reference key="2">
    <citation type="journal article" date="2014" name="PLoS Genet.">
        <title>Phylogenetically driven sequencing of extremely halophilic archaea reveals strategies for static and dynamic osmo-response.</title>
        <authorList>
            <person name="Becker E.A."/>
            <person name="Seitzer P.M."/>
            <person name="Tritt A."/>
            <person name="Larsen D."/>
            <person name="Krusor M."/>
            <person name="Yao A.I."/>
            <person name="Wu D."/>
            <person name="Madern D."/>
            <person name="Eisen J.A."/>
            <person name="Darling A.E."/>
            <person name="Facciotti M.T."/>
        </authorList>
    </citation>
    <scope>NUCLEOTIDE SEQUENCE [LARGE SCALE GENOMIC DNA]</scope>
    <source>
        <strain>ATCC 29605 / DSM 3757 / JCM 8879 / NBRC 14742 / NCIMB 2012 / VKM B-1768 / DS2</strain>
    </source>
</reference>
<reference key="3">
    <citation type="journal article" date="2009" name="Archaea">
        <title>A Gateway platform for functional genomics in Haloferax volcanii: deletion of three tRNA modification genes.</title>
        <authorList>
            <person name="El Yacoubi B."/>
            <person name="Phillips G."/>
            <person name="Blaby I.K."/>
            <person name="Haas C.E."/>
            <person name="Cruz Y."/>
            <person name="Greenberg J."/>
            <person name="de Crecy-Lagard V."/>
        </authorList>
    </citation>
    <scope>FUNCTION</scope>
    <scope>DISRUPTION PHENOTYPE</scope>
    <source>
        <strain>DS2 / DS70</strain>
    </source>
</reference>
<protein>
    <recommendedName>
        <fullName evidence="1">tRNA(Met) cytidine acetyltransferase TmcA</fullName>
        <ecNumber evidence="1">2.3.1.193</ecNumber>
    </recommendedName>
</protein>
<keyword id="KW-0012">Acyltransferase</keyword>
<keyword id="KW-0067">ATP-binding</keyword>
<keyword id="KW-0963">Cytoplasm</keyword>
<keyword id="KW-0547">Nucleotide-binding</keyword>
<keyword id="KW-1185">Reference proteome</keyword>
<keyword id="KW-0694">RNA-binding</keyword>
<keyword id="KW-0808">Transferase</keyword>
<keyword id="KW-0819">tRNA processing</keyword>
<keyword id="KW-0820">tRNA-binding</keyword>